<name>NADK2_LISMF</name>
<reference key="1">
    <citation type="journal article" date="2004" name="Nucleic Acids Res.">
        <title>Whole genome comparisons of serotype 4b and 1/2a strains of the food-borne pathogen Listeria monocytogenes reveal new insights into the core genome components of this species.</title>
        <authorList>
            <person name="Nelson K.E."/>
            <person name="Fouts D.E."/>
            <person name="Mongodin E.F."/>
            <person name="Ravel J."/>
            <person name="DeBoy R.T."/>
            <person name="Kolonay J.F."/>
            <person name="Rasko D.A."/>
            <person name="Angiuoli S.V."/>
            <person name="Gill S.R."/>
            <person name="Paulsen I.T."/>
            <person name="Peterson J.D."/>
            <person name="White O."/>
            <person name="Nelson W.C."/>
            <person name="Nierman W.C."/>
            <person name="Beanan M.J."/>
            <person name="Brinkac L.M."/>
            <person name="Daugherty S.C."/>
            <person name="Dodson R.J."/>
            <person name="Durkin A.S."/>
            <person name="Madupu R."/>
            <person name="Haft D.H."/>
            <person name="Selengut J."/>
            <person name="Van Aken S.E."/>
            <person name="Khouri H.M."/>
            <person name="Fedorova N."/>
            <person name="Forberger H.A."/>
            <person name="Tran B."/>
            <person name="Kathariou S."/>
            <person name="Wonderling L.D."/>
            <person name="Uhlich G.A."/>
            <person name="Bayles D.O."/>
            <person name="Luchansky J.B."/>
            <person name="Fraser C.M."/>
        </authorList>
    </citation>
    <scope>NUCLEOTIDE SEQUENCE [LARGE SCALE GENOMIC DNA]</scope>
    <source>
        <strain>F2365</strain>
    </source>
</reference>
<evidence type="ECO:0000255" key="1">
    <source>
        <dbReference type="HAMAP-Rule" id="MF_00361"/>
    </source>
</evidence>
<dbReference type="EC" id="2.7.1.23" evidence="1"/>
<dbReference type="EMBL" id="AE017262">
    <property type="protein sequence ID" value="AAT04383.1"/>
    <property type="molecule type" value="Genomic_DNA"/>
</dbReference>
<dbReference type="RefSeq" id="WP_003723315.1">
    <property type="nucleotide sequence ID" value="NC_002973.6"/>
</dbReference>
<dbReference type="SMR" id="Q71Z81"/>
<dbReference type="KEGG" id="lmf:LMOf2365_1608"/>
<dbReference type="HOGENOM" id="CLU_008831_0_3_9"/>
<dbReference type="GO" id="GO:0005737">
    <property type="term" value="C:cytoplasm"/>
    <property type="evidence" value="ECO:0007669"/>
    <property type="project" value="UniProtKB-SubCell"/>
</dbReference>
<dbReference type="GO" id="GO:0005524">
    <property type="term" value="F:ATP binding"/>
    <property type="evidence" value="ECO:0007669"/>
    <property type="project" value="UniProtKB-KW"/>
</dbReference>
<dbReference type="GO" id="GO:0046872">
    <property type="term" value="F:metal ion binding"/>
    <property type="evidence" value="ECO:0007669"/>
    <property type="project" value="UniProtKB-UniRule"/>
</dbReference>
<dbReference type="GO" id="GO:0051287">
    <property type="term" value="F:NAD binding"/>
    <property type="evidence" value="ECO:0007669"/>
    <property type="project" value="UniProtKB-ARBA"/>
</dbReference>
<dbReference type="GO" id="GO:0003951">
    <property type="term" value="F:NAD+ kinase activity"/>
    <property type="evidence" value="ECO:0007669"/>
    <property type="project" value="UniProtKB-UniRule"/>
</dbReference>
<dbReference type="GO" id="GO:0019674">
    <property type="term" value="P:NAD metabolic process"/>
    <property type="evidence" value="ECO:0007669"/>
    <property type="project" value="InterPro"/>
</dbReference>
<dbReference type="GO" id="GO:0006741">
    <property type="term" value="P:NADP biosynthetic process"/>
    <property type="evidence" value="ECO:0007669"/>
    <property type="project" value="UniProtKB-UniRule"/>
</dbReference>
<dbReference type="Gene3D" id="3.40.50.10330">
    <property type="entry name" value="Probable inorganic polyphosphate/atp-NAD kinase, domain 1"/>
    <property type="match status" value="1"/>
</dbReference>
<dbReference type="Gene3D" id="2.60.200.30">
    <property type="entry name" value="Probable inorganic polyphosphate/atp-NAD kinase, domain 2"/>
    <property type="match status" value="1"/>
</dbReference>
<dbReference type="HAMAP" id="MF_00361">
    <property type="entry name" value="NAD_kinase"/>
    <property type="match status" value="1"/>
</dbReference>
<dbReference type="InterPro" id="IPR017438">
    <property type="entry name" value="ATP-NAD_kinase_N"/>
</dbReference>
<dbReference type="InterPro" id="IPR017437">
    <property type="entry name" value="ATP-NAD_kinase_PpnK-typ_C"/>
</dbReference>
<dbReference type="InterPro" id="IPR016064">
    <property type="entry name" value="NAD/diacylglycerol_kinase_sf"/>
</dbReference>
<dbReference type="InterPro" id="IPR002504">
    <property type="entry name" value="NADK"/>
</dbReference>
<dbReference type="NCBIfam" id="NF002902">
    <property type="entry name" value="PRK03501.1"/>
    <property type="match status" value="1"/>
</dbReference>
<dbReference type="PANTHER" id="PTHR20275">
    <property type="entry name" value="NAD KINASE"/>
    <property type="match status" value="1"/>
</dbReference>
<dbReference type="PANTHER" id="PTHR20275:SF9">
    <property type="entry name" value="NAD KINASE 2"/>
    <property type="match status" value="1"/>
</dbReference>
<dbReference type="Pfam" id="PF20143">
    <property type="entry name" value="NAD_kinase_C"/>
    <property type="match status" value="1"/>
</dbReference>
<dbReference type="SUPFAM" id="SSF111331">
    <property type="entry name" value="NAD kinase/diacylglycerol kinase-like"/>
    <property type="match status" value="1"/>
</dbReference>
<protein>
    <recommendedName>
        <fullName evidence="1">NAD kinase 2</fullName>
        <ecNumber evidence="1">2.7.1.23</ecNumber>
    </recommendedName>
    <alternativeName>
        <fullName evidence="1">ATP-dependent NAD kinase 2</fullName>
    </alternativeName>
</protein>
<organism>
    <name type="scientific">Listeria monocytogenes serotype 4b (strain F2365)</name>
    <dbReference type="NCBI Taxonomy" id="265669"/>
    <lineage>
        <taxon>Bacteria</taxon>
        <taxon>Bacillati</taxon>
        <taxon>Bacillota</taxon>
        <taxon>Bacilli</taxon>
        <taxon>Bacillales</taxon>
        <taxon>Listeriaceae</taxon>
        <taxon>Listeria</taxon>
    </lineage>
</organism>
<keyword id="KW-0067">ATP-binding</keyword>
<keyword id="KW-0963">Cytoplasm</keyword>
<keyword id="KW-0418">Kinase</keyword>
<keyword id="KW-0520">NAD</keyword>
<keyword id="KW-0521">NADP</keyword>
<keyword id="KW-0547">Nucleotide-binding</keyword>
<keyword id="KW-0808">Transferase</keyword>
<sequence>MAKTIFYFSYRKTEELHAKAKELKKITTDYGYELTDDYQKANVIISIGGDGAFLKSVRETGFRQDCLYAGIALTEQLGQYCDFHINQLDEIIKAAIEDRWLVRRYPTIYGTVNNTKAFYVLNEFNIRSSIIRTLTMDLYINDSHFETFRGDGMVISTPTGSTAYNKSVNGSIVDPLLPSMQVSELASINNNKFRTLGSSFILSPKRKLRIEIASEEGNNEFPMIGMDSEALSIQHVHEVNLEVGDRFINIIKLPKNSFWDKVKRNFL</sequence>
<proteinExistence type="inferred from homology"/>
<comment type="function">
    <text evidence="1">Involved in the regulation of the intracellular balance of NAD and NADP, and is a key enzyme in the biosynthesis of NADP. Catalyzes specifically the phosphorylation on 2'-hydroxyl of the adenosine moiety of NAD to yield NADP.</text>
</comment>
<comment type="catalytic activity">
    <reaction evidence="1">
        <text>NAD(+) + ATP = ADP + NADP(+) + H(+)</text>
        <dbReference type="Rhea" id="RHEA:18629"/>
        <dbReference type="ChEBI" id="CHEBI:15378"/>
        <dbReference type="ChEBI" id="CHEBI:30616"/>
        <dbReference type="ChEBI" id="CHEBI:57540"/>
        <dbReference type="ChEBI" id="CHEBI:58349"/>
        <dbReference type="ChEBI" id="CHEBI:456216"/>
        <dbReference type="EC" id="2.7.1.23"/>
    </reaction>
</comment>
<comment type="cofactor">
    <cofactor evidence="1">
        <name>a divalent metal cation</name>
        <dbReference type="ChEBI" id="CHEBI:60240"/>
    </cofactor>
</comment>
<comment type="subcellular location">
    <subcellularLocation>
        <location evidence="1">Cytoplasm</location>
    </subcellularLocation>
</comment>
<comment type="similarity">
    <text evidence="1">Belongs to the NAD kinase family.</text>
</comment>
<accession>Q71Z81</accession>
<feature type="chain" id="PRO_0000120631" description="NAD kinase 2">
    <location>
        <begin position="1"/>
        <end position="267"/>
    </location>
</feature>
<feature type="active site" description="Proton acceptor" evidence="1">
    <location>
        <position position="50"/>
    </location>
</feature>
<feature type="binding site" evidence="1">
    <location>
        <begin position="50"/>
        <end position="51"/>
    </location>
    <ligand>
        <name>NAD(+)</name>
        <dbReference type="ChEBI" id="CHEBI:57540"/>
    </ligand>
</feature>
<feature type="binding site" evidence="1">
    <location>
        <position position="55"/>
    </location>
    <ligand>
        <name>NAD(+)</name>
        <dbReference type="ChEBI" id="CHEBI:57540"/>
    </ligand>
</feature>
<feature type="binding site" evidence="1">
    <location>
        <begin position="122"/>
        <end position="123"/>
    </location>
    <ligand>
        <name>NAD(+)</name>
        <dbReference type="ChEBI" id="CHEBI:57540"/>
    </ligand>
</feature>
<feature type="binding site" evidence="1">
    <location>
        <position position="149"/>
    </location>
    <ligand>
        <name>NAD(+)</name>
        <dbReference type="ChEBI" id="CHEBI:57540"/>
    </ligand>
</feature>
<feature type="binding site" evidence="1">
    <location>
        <position position="151"/>
    </location>
    <ligand>
        <name>NAD(+)</name>
        <dbReference type="ChEBI" id="CHEBI:57540"/>
    </ligand>
</feature>
<feature type="binding site" evidence="1">
    <location>
        <begin position="162"/>
        <end position="167"/>
    </location>
    <ligand>
        <name>NAD(+)</name>
        <dbReference type="ChEBI" id="CHEBI:57540"/>
    </ligand>
</feature>
<feature type="binding site" evidence="1">
    <location>
        <position position="186"/>
    </location>
    <ligand>
        <name>NAD(+)</name>
        <dbReference type="ChEBI" id="CHEBI:57540"/>
    </ligand>
</feature>
<gene>
    <name evidence="1" type="primary">nadK2</name>
    <name type="ordered locus">LMOf2365_1608</name>
</gene>